<feature type="chain" id="PRO_1000213964" description="UPF0210 protein Hore_14430">
    <location>
        <begin position="1"/>
        <end position="452"/>
    </location>
</feature>
<comment type="subunit">
    <text evidence="1">Homodimer.</text>
</comment>
<comment type="similarity">
    <text evidence="1">Belongs to the UPF0210 family.</text>
</comment>
<protein>
    <recommendedName>
        <fullName evidence="1">UPF0210 protein Hore_14430</fullName>
    </recommendedName>
</protein>
<dbReference type="EMBL" id="CP001098">
    <property type="protein sequence ID" value="ACL70192.1"/>
    <property type="molecule type" value="Genomic_DNA"/>
</dbReference>
<dbReference type="RefSeq" id="WP_012636375.1">
    <property type="nucleotide sequence ID" value="NC_011899.1"/>
</dbReference>
<dbReference type="SMR" id="B8CY23"/>
<dbReference type="STRING" id="373903.Hore_14430"/>
<dbReference type="KEGG" id="hor:Hore_14430"/>
<dbReference type="eggNOG" id="COG2848">
    <property type="taxonomic scope" value="Bacteria"/>
</dbReference>
<dbReference type="HOGENOM" id="CLU_048704_0_0_9"/>
<dbReference type="OrthoDB" id="9763001at2"/>
<dbReference type="Proteomes" id="UP000000719">
    <property type="component" value="Chromosome"/>
</dbReference>
<dbReference type="CDD" id="cd08025">
    <property type="entry name" value="RNR_PFL_like_DUF711"/>
    <property type="match status" value="1"/>
</dbReference>
<dbReference type="Gene3D" id="3.20.70.20">
    <property type="match status" value="1"/>
</dbReference>
<dbReference type="HAMAP" id="MF_01221">
    <property type="entry name" value="UPF0210"/>
    <property type="match status" value="1"/>
</dbReference>
<dbReference type="InterPro" id="IPR007841">
    <property type="entry name" value="UPF0210"/>
</dbReference>
<dbReference type="NCBIfam" id="NF003700">
    <property type="entry name" value="PRK05313.1"/>
    <property type="match status" value="1"/>
</dbReference>
<dbReference type="PANTHER" id="PTHR37560:SF1">
    <property type="entry name" value="UPF0210 PROTEIN MJ1665"/>
    <property type="match status" value="1"/>
</dbReference>
<dbReference type="PANTHER" id="PTHR37560">
    <property type="entry name" value="UPF0210 PROTEIN SPR0218"/>
    <property type="match status" value="1"/>
</dbReference>
<dbReference type="Pfam" id="PF05167">
    <property type="entry name" value="DUF711"/>
    <property type="match status" value="1"/>
</dbReference>
<dbReference type="SUPFAM" id="SSF51998">
    <property type="entry name" value="PFL-like glycyl radical enzymes"/>
    <property type="match status" value="1"/>
</dbReference>
<keyword id="KW-1185">Reference proteome</keyword>
<proteinExistence type="inferred from homology"/>
<name>Y1443_HALOH</name>
<reference key="1">
    <citation type="journal article" date="2009" name="PLoS ONE">
        <title>Genome analysis of the anaerobic thermohalophilic bacterium Halothermothrix orenii.</title>
        <authorList>
            <person name="Mavromatis K."/>
            <person name="Ivanova N."/>
            <person name="Anderson I."/>
            <person name="Lykidis A."/>
            <person name="Hooper S.D."/>
            <person name="Sun H."/>
            <person name="Kunin V."/>
            <person name="Lapidus A."/>
            <person name="Hugenholtz P."/>
            <person name="Patel B."/>
            <person name="Kyrpides N.C."/>
        </authorList>
    </citation>
    <scope>NUCLEOTIDE SEQUENCE [LARGE SCALE GENOMIC DNA]</scope>
    <source>
        <strain>H 168 / OCM 544 / DSM 9562</strain>
    </source>
</reference>
<accession>B8CY23</accession>
<organism>
    <name type="scientific">Halothermothrix orenii (strain H 168 / OCM 544 / DSM 9562)</name>
    <dbReference type="NCBI Taxonomy" id="373903"/>
    <lineage>
        <taxon>Bacteria</taxon>
        <taxon>Bacillati</taxon>
        <taxon>Bacillota</taxon>
        <taxon>Clostridia</taxon>
        <taxon>Halanaerobiales</taxon>
        <taxon>Halothermotrichaceae</taxon>
        <taxon>Halothermothrix</taxon>
    </lineage>
</organism>
<gene>
    <name type="ordered locus">Hore_14430</name>
</gene>
<sequence>MLNPYEIMETIRMIEEEKLDIRTITMGISLRDCAHPSGEVARKNIYDKILRYAGNLVEVARDIELEYGIPIINKRIAVTPISLVAESSSEEDFIKFAETLDKAAGEVGVDFIGGFSALVHKGFTTGDKKLINSIPRALANTERVCSSINVATTRAGINMEAVSRMGKIIKKTARETRDKGGLGCAKLVVFANVPEDNPFMAGAFHGIGEPECVINVGISGPGAVKAALKKVKGQKFDTVAETIKKTAFKITRAGQLVAREASKRLNVPFGIVDLSLAPTPAVGDSVAEILEEMGLESCGAPGTTAALALLNDAVKKGGTMASSHVGGLSGAFIPVSEDAGMIKAVKRGSLNLEKLEAMTCVCSVGLDMIAVPGSTKADTISAVIADEVAIGVINNKTTAVRIIPVPGKDVGDEVEFGGLLGTAPVMDVSKFSSSAFIGRGGRIPAPIHSLKN</sequence>
<evidence type="ECO:0000255" key="1">
    <source>
        <dbReference type="HAMAP-Rule" id="MF_01221"/>
    </source>
</evidence>